<reference key="1">
    <citation type="journal article" date="2005" name="Science">
        <title>The transcriptional landscape of the mammalian genome.</title>
        <authorList>
            <person name="Carninci P."/>
            <person name="Kasukawa T."/>
            <person name="Katayama S."/>
            <person name="Gough J."/>
            <person name="Frith M.C."/>
            <person name="Maeda N."/>
            <person name="Oyama R."/>
            <person name="Ravasi T."/>
            <person name="Lenhard B."/>
            <person name="Wells C."/>
            <person name="Kodzius R."/>
            <person name="Shimokawa K."/>
            <person name="Bajic V.B."/>
            <person name="Brenner S.E."/>
            <person name="Batalov S."/>
            <person name="Forrest A.R."/>
            <person name="Zavolan M."/>
            <person name="Davis M.J."/>
            <person name="Wilming L.G."/>
            <person name="Aidinis V."/>
            <person name="Allen J.E."/>
            <person name="Ambesi-Impiombato A."/>
            <person name="Apweiler R."/>
            <person name="Aturaliya R.N."/>
            <person name="Bailey T.L."/>
            <person name="Bansal M."/>
            <person name="Baxter L."/>
            <person name="Beisel K.W."/>
            <person name="Bersano T."/>
            <person name="Bono H."/>
            <person name="Chalk A.M."/>
            <person name="Chiu K.P."/>
            <person name="Choudhary V."/>
            <person name="Christoffels A."/>
            <person name="Clutterbuck D.R."/>
            <person name="Crowe M.L."/>
            <person name="Dalla E."/>
            <person name="Dalrymple B.P."/>
            <person name="de Bono B."/>
            <person name="Della Gatta G."/>
            <person name="di Bernardo D."/>
            <person name="Down T."/>
            <person name="Engstrom P."/>
            <person name="Fagiolini M."/>
            <person name="Faulkner G."/>
            <person name="Fletcher C.F."/>
            <person name="Fukushima T."/>
            <person name="Furuno M."/>
            <person name="Futaki S."/>
            <person name="Gariboldi M."/>
            <person name="Georgii-Hemming P."/>
            <person name="Gingeras T.R."/>
            <person name="Gojobori T."/>
            <person name="Green R.E."/>
            <person name="Gustincich S."/>
            <person name="Harbers M."/>
            <person name="Hayashi Y."/>
            <person name="Hensch T.K."/>
            <person name="Hirokawa N."/>
            <person name="Hill D."/>
            <person name="Huminiecki L."/>
            <person name="Iacono M."/>
            <person name="Ikeo K."/>
            <person name="Iwama A."/>
            <person name="Ishikawa T."/>
            <person name="Jakt M."/>
            <person name="Kanapin A."/>
            <person name="Katoh M."/>
            <person name="Kawasawa Y."/>
            <person name="Kelso J."/>
            <person name="Kitamura H."/>
            <person name="Kitano H."/>
            <person name="Kollias G."/>
            <person name="Krishnan S.P."/>
            <person name="Kruger A."/>
            <person name="Kummerfeld S.K."/>
            <person name="Kurochkin I.V."/>
            <person name="Lareau L.F."/>
            <person name="Lazarevic D."/>
            <person name="Lipovich L."/>
            <person name="Liu J."/>
            <person name="Liuni S."/>
            <person name="McWilliam S."/>
            <person name="Madan Babu M."/>
            <person name="Madera M."/>
            <person name="Marchionni L."/>
            <person name="Matsuda H."/>
            <person name="Matsuzawa S."/>
            <person name="Miki H."/>
            <person name="Mignone F."/>
            <person name="Miyake S."/>
            <person name="Morris K."/>
            <person name="Mottagui-Tabar S."/>
            <person name="Mulder N."/>
            <person name="Nakano N."/>
            <person name="Nakauchi H."/>
            <person name="Ng P."/>
            <person name="Nilsson R."/>
            <person name="Nishiguchi S."/>
            <person name="Nishikawa S."/>
            <person name="Nori F."/>
            <person name="Ohara O."/>
            <person name="Okazaki Y."/>
            <person name="Orlando V."/>
            <person name="Pang K.C."/>
            <person name="Pavan W.J."/>
            <person name="Pavesi G."/>
            <person name="Pesole G."/>
            <person name="Petrovsky N."/>
            <person name="Piazza S."/>
            <person name="Reed J."/>
            <person name="Reid J.F."/>
            <person name="Ring B.Z."/>
            <person name="Ringwald M."/>
            <person name="Rost B."/>
            <person name="Ruan Y."/>
            <person name="Salzberg S.L."/>
            <person name="Sandelin A."/>
            <person name="Schneider C."/>
            <person name="Schoenbach C."/>
            <person name="Sekiguchi K."/>
            <person name="Semple C.A."/>
            <person name="Seno S."/>
            <person name="Sessa L."/>
            <person name="Sheng Y."/>
            <person name="Shibata Y."/>
            <person name="Shimada H."/>
            <person name="Shimada K."/>
            <person name="Silva D."/>
            <person name="Sinclair B."/>
            <person name="Sperling S."/>
            <person name="Stupka E."/>
            <person name="Sugiura K."/>
            <person name="Sultana R."/>
            <person name="Takenaka Y."/>
            <person name="Taki K."/>
            <person name="Tammoja K."/>
            <person name="Tan S.L."/>
            <person name="Tang S."/>
            <person name="Taylor M.S."/>
            <person name="Tegner J."/>
            <person name="Teichmann S.A."/>
            <person name="Ueda H.R."/>
            <person name="van Nimwegen E."/>
            <person name="Verardo R."/>
            <person name="Wei C.L."/>
            <person name="Yagi K."/>
            <person name="Yamanishi H."/>
            <person name="Zabarovsky E."/>
            <person name="Zhu S."/>
            <person name="Zimmer A."/>
            <person name="Hide W."/>
            <person name="Bult C."/>
            <person name="Grimmond S.M."/>
            <person name="Teasdale R.D."/>
            <person name="Liu E.T."/>
            <person name="Brusic V."/>
            <person name="Quackenbush J."/>
            <person name="Wahlestedt C."/>
            <person name="Mattick J.S."/>
            <person name="Hume D.A."/>
            <person name="Kai C."/>
            <person name="Sasaki D."/>
            <person name="Tomaru Y."/>
            <person name="Fukuda S."/>
            <person name="Kanamori-Katayama M."/>
            <person name="Suzuki M."/>
            <person name="Aoki J."/>
            <person name="Arakawa T."/>
            <person name="Iida J."/>
            <person name="Imamura K."/>
            <person name="Itoh M."/>
            <person name="Kato T."/>
            <person name="Kawaji H."/>
            <person name="Kawagashira N."/>
            <person name="Kawashima T."/>
            <person name="Kojima M."/>
            <person name="Kondo S."/>
            <person name="Konno H."/>
            <person name="Nakano K."/>
            <person name="Ninomiya N."/>
            <person name="Nishio T."/>
            <person name="Okada M."/>
            <person name="Plessy C."/>
            <person name="Shibata K."/>
            <person name="Shiraki T."/>
            <person name="Suzuki S."/>
            <person name="Tagami M."/>
            <person name="Waki K."/>
            <person name="Watahiki A."/>
            <person name="Okamura-Oho Y."/>
            <person name="Suzuki H."/>
            <person name="Kawai J."/>
            <person name="Hayashizaki Y."/>
        </authorList>
    </citation>
    <scope>NUCLEOTIDE SEQUENCE [LARGE SCALE MRNA] (ISOFORM 3)</scope>
    <scope>NUCLEOTIDE SEQUENCE [LARGE SCALE MRNA] OF 1-235 (ISOFORM 2)</scope>
    <source>
        <strain>C57BL/6J</strain>
        <tissue>Egg</tissue>
    </source>
</reference>
<reference key="2">
    <citation type="journal article" date="2004" name="Genome Res.">
        <title>The status, quality, and expansion of the NIH full-length cDNA project: the Mammalian Gene Collection (MGC).</title>
        <authorList>
            <consortium name="The MGC Project Team"/>
        </authorList>
    </citation>
    <scope>NUCLEOTIDE SEQUENCE [LARGE SCALE MRNA] (ISOFORM 1)</scope>
</reference>
<sequence length="379" mass="42326">MEGNRDEAEKCVQIAREALSAGNRDKAQRFLQKAEKLYPLPAARALLEIIMKNGSTAGSSTHCRKPPGSSDQSKPSCGKDGTSGAGEGGKVYTKDQVEGVLSINKCKNYYEVLGVTKDAGDEDLKKAYRKLALKFHPDKNHAPGATDAFKKIGNAYAVLSNPEKRKQYDLTGSEEQACNHQNNGRFNFHRGCEADITPEDLFNIFFGGGFPSGSVHSFSNGRAAYSHQHQHRHSGHEREEERADGGFSVFIQLMPIIVLILVSLLSQLMVSNPPYSLYPRSGSGQTIKMQTENLGVVYYVSKDFKSEYKGTLLQKVEKSVEEDYVTNIRNNCWKERQQKTDMQYAAKVYRDEQLRRKADALSMENCKELERLTSLYKGG</sequence>
<evidence type="ECO:0000250" key="1">
    <source>
        <dbReference type="UniProtKB" id="Q8TBM8"/>
    </source>
</evidence>
<evidence type="ECO:0000255" key="2"/>
<evidence type="ECO:0000255" key="3">
    <source>
        <dbReference type="PROSITE-ProRule" id="PRU00286"/>
    </source>
</evidence>
<evidence type="ECO:0000256" key="4">
    <source>
        <dbReference type="SAM" id="MobiDB-lite"/>
    </source>
</evidence>
<evidence type="ECO:0000303" key="5">
    <source>
    </source>
</evidence>
<evidence type="ECO:0000305" key="6"/>
<evidence type="ECO:0000312" key="7">
    <source>
        <dbReference type="MGI" id="MGI:1917854"/>
    </source>
</evidence>
<keyword id="KW-0025">Alternative splicing</keyword>
<keyword id="KW-0143">Chaperone</keyword>
<keyword id="KW-0256">Endoplasmic reticulum</keyword>
<keyword id="KW-0472">Membrane</keyword>
<keyword id="KW-0539">Nucleus</keyword>
<keyword id="KW-1185">Reference proteome</keyword>
<keyword id="KW-0812">Transmembrane</keyword>
<keyword id="KW-1133">Transmembrane helix</keyword>
<accession>Q149L6</accession>
<accession>Q3TU54</accession>
<accession>Q3UTE5</accession>
<feature type="chain" id="PRO_0000281479" description="DnaJ homolog subfamily B member 14">
    <location>
        <begin position="1"/>
        <end position="379"/>
    </location>
</feature>
<feature type="topological domain" description="Cytoplasmic" evidence="2">
    <location>
        <begin position="1"/>
        <end position="244"/>
    </location>
</feature>
<feature type="transmembrane region" description="Helical" evidence="2">
    <location>
        <begin position="245"/>
        <end position="265"/>
    </location>
</feature>
<feature type="topological domain" description="Lumenal" evidence="2">
    <location>
        <begin position="266"/>
        <end position="379"/>
    </location>
</feature>
<feature type="domain" description="J" evidence="3">
    <location>
        <begin position="108"/>
        <end position="172"/>
    </location>
</feature>
<feature type="region of interest" description="Disordered" evidence="4">
    <location>
        <begin position="56"/>
        <end position="90"/>
    </location>
</feature>
<feature type="splice variant" id="VSP_024008" description="In isoform 2." evidence="5">
    <location>
        <begin position="1"/>
        <end position="50"/>
    </location>
</feature>
<feature type="splice variant" id="VSP_024009" description="In isoform 3." evidence="5">
    <original>KIGNAYAV</original>
    <variation>SKVTYDTS</variation>
    <location>
        <begin position="151"/>
        <end position="158"/>
    </location>
</feature>
<feature type="splice variant" id="VSP_024010" description="In isoform 3." evidence="5">
    <location>
        <begin position="159"/>
        <end position="379"/>
    </location>
</feature>
<gene>
    <name evidence="7" type="primary">Dnajb14</name>
</gene>
<organism>
    <name type="scientific">Mus musculus</name>
    <name type="common">Mouse</name>
    <dbReference type="NCBI Taxonomy" id="10090"/>
    <lineage>
        <taxon>Eukaryota</taxon>
        <taxon>Metazoa</taxon>
        <taxon>Chordata</taxon>
        <taxon>Craniata</taxon>
        <taxon>Vertebrata</taxon>
        <taxon>Euteleostomi</taxon>
        <taxon>Mammalia</taxon>
        <taxon>Eutheria</taxon>
        <taxon>Euarchontoglires</taxon>
        <taxon>Glires</taxon>
        <taxon>Rodentia</taxon>
        <taxon>Myomorpha</taxon>
        <taxon>Muroidea</taxon>
        <taxon>Muridae</taxon>
        <taxon>Murinae</taxon>
        <taxon>Mus</taxon>
        <taxon>Mus</taxon>
    </lineage>
</organism>
<protein>
    <recommendedName>
        <fullName evidence="7">DnaJ homolog subfamily B member 14</fullName>
    </recommendedName>
</protein>
<proteinExistence type="evidence at transcript level"/>
<dbReference type="EMBL" id="AK139489">
    <property type="protein sequence ID" value="BAE24035.1"/>
    <property type="molecule type" value="mRNA"/>
</dbReference>
<dbReference type="EMBL" id="AK160961">
    <property type="protein sequence ID" value="BAE36117.1"/>
    <property type="molecule type" value="mRNA"/>
</dbReference>
<dbReference type="EMBL" id="BC117717">
    <property type="protein sequence ID" value="AAI17718.1"/>
    <property type="molecule type" value="mRNA"/>
</dbReference>
<dbReference type="EMBL" id="BC117718">
    <property type="protein sequence ID" value="AAI17719.1"/>
    <property type="molecule type" value="mRNA"/>
</dbReference>
<dbReference type="CCDS" id="CCDS51077.1">
    <molecule id="Q149L6-1"/>
</dbReference>
<dbReference type="RefSeq" id="NP_001028327.1">
    <molecule id="Q149L6-1"/>
    <property type="nucleotide sequence ID" value="NM_001033155.1"/>
</dbReference>
<dbReference type="RefSeq" id="XP_006502118.1">
    <molecule id="Q149L6-2"/>
    <property type="nucleotide sequence ID" value="XM_006502055.3"/>
</dbReference>
<dbReference type="SMR" id="Q149L6"/>
<dbReference type="BioGRID" id="214160">
    <property type="interactions" value="2"/>
</dbReference>
<dbReference type="FunCoup" id="Q149L6">
    <property type="interactions" value="3767"/>
</dbReference>
<dbReference type="STRING" id="10090.ENSMUSP00000087641"/>
<dbReference type="iPTMnet" id="Q149L6"/>
<dbReference type="PhosphoSitePlus" id="Q149L6"/>
<dbReference type="SwissPalm" id="Q149L6"/>
<dbReference type="PaxDb" id="10090-ENSMUSP00000087641"/>
<dbReference type="PeptideAtlas" id="Q149L6"/>
<dbReference type="ProteomicsDB" id="279666">
    <molecule id="Q149L6-1"/>
</dbReference>
<dbReference type="ProteomicsDB" id="279667">
    <molecule id="Q149L6-2"/>
</dbReference>
<dbReference type="ProteomicsDB" id="279668">
    <molecule id="Q149L6-3"/>
</dbReference>
<dbReference type="Pumba" id="Q149L6"/>
<dbReference type="Antibodypedia" id="45017">
    <property type="antibodies" value="91 antibodies from 22 providers"/>
</dbReference>
<dbReference type="Ensembl" id="ENSMUST00000090178.10">
    <molecule id="Q149L6-1"/>
    <property type="protein sequence ID" value="ENSMUSP00000087641.6"/>
    <property type="gene ID" value="ENSMUSG00000074212.8"/>
</dbReference>
<dbReference type="GeneID" id="70604"/>
<dbReference type="KEGG" id="mmu:70604"/>
<dbReference type="UCSC" id="uc008rmq.2">
    <molecule id="Q149L6-3"/>
    <property type="organism name" value="mouse"/>
</dbReference>
<dbReference type="UCSC" id="uc008rmr.2">
    <molecule id="Q149L6-1"/>
    <property type="organism name" value="mouse"/>
</dbReference>
<dbReference type="AGR" id="MGI:1917854"/>
<dbReference type="CTD" id="79982"/>
<dbReference type="MGI" id="MGI:1917854">
    <property type="gene designation" value="Dnajb14"/>
</dbReference>
<dbReference type="VEuPathDB" id="HostDB:ENSMUSG00000074212"/>
<dbReference type="eggNOG" id="KOG0714">
    <property type="taxonomic scope" value="Eukaryota"/>
</dbReference>
<dbReference type="GeneTree" id="ENSGT00940000157887"/>
<dbReference type="HOGENOM" id="CLU_043579_3_0_1"/>
<dbReference type="InParanoid" id="Q149L6"/>
<dbReference type="OMA" id="DDRMRKK"/>
<dbReference type="OrthoDB" id="442087at2759"/>
<dbReference type="PhylomeDB" id="Q149L6"/>
<dbReference type="TreeFam" id="TF105145"/>
<dbReference type="BioGRID-ORCS" id="70604">
    <property type="hits" value="4 hits in 77 CRISPR screens"/>
</dbReference>
<dbReference type="ChiTaRS" id="Dnajb14">
    <property type="organism name" value="mouse"/>
</dbReference>
<dbReference type="PRO" id="PR:Q149L6"/>
<dbReference type="Proteomes" id="UP000000589">
    <property type="component" value="Chromosome 3"/>
</dbReference>
<dbReference type="RNAct" id="Q149L6">
    <property type="molecule type" value="protein"/>
</dbReference>
<dbReference type="Bgee" id="ENSMUSG00000074212">
    <property type="expression patterns" value="Expressed in spermatid and 227 other cell types or tissues"/>
</dbReference>
<dbReference type="ExpressionAtlas" id="Q149L6">
    <property type="expression patterns" value="baseline and differential"/>
</dbReference>
<dbReference type="GO" id="GO:0005783">
    <property type="term" value="C:endoplasmic reticulum"/>
    <property type="evidence" value="ECO:0000250"/>
    <property type="project" value="UniProtKB"/>
</dbReference>
<dbReference type="GO" id="GO:0005789">
    <property type="term" value="C:endoplasmic reticulum membrane"/>
    <property type="evidence" value="ECO:0007669"/>
    <property type="project" value="UniProtKB-SubCell"/>
</dbReference>
<dbReference type="GO" id="GO:0031965">
    <property type="term" value="C:nuclear membrane"/>
    <property type="evidence" value="ECO:0007669"/>
    <property type="project" value="UniProtKB-SubCell"/>
</dbReference>
<dbReference type="GO" id="GO:0030544">
    <property type="term" value="F:Hsp70 protein binding"/>
    <property type="evidence" value="ECO:0007669"/>
    <property type="project" value="Ensembl"/>
</dbReference>
<dbReference type="GO" id="GO:0051085">
    <property type="term" value="P:chaperone cofactor-dependent protein refolding"/>
    <property type="evidence" value="ECO:0000250"/>
    <property type="project" value="UniProtKB"/>
</dbReference>
<dbReference type="GO" id="GO:0065003">
    <property type="term" value="P:protein-containing complex assembly"/>
    <property type="evidence" value="ECO:0000250"/>
    <property type="project" value="UniProtKB"/>
</dbReference>
<dbReference type="CDD" id="cd06257">
    <property type="entry name" value="DnaJ"/>
    <property type="match status" value="1"/>
</dbReference>
<dbReference type="FunFam" id="1.10.287.110:FF:000004">
    <property type="entry name" value="DnaJ (Hsp40) homolog, subfamily B, member 14"/>
    <property type="match status" value="1"/>
</dbReference>
<dbReference type="Gene3D" id="1.10.287.110">
    <property type="entry name" value="DnaJ domain"/>
    <property type="match status" value="1"/>
</dbReference>
<dbReference type="InterPro" id="IPR001623">
    <property type="entry name" value="DnaJ_domain"/>
</dbReference>
<dbReference type="InterPro" id="IPR018253">
    <property type="entry name" value="DnaJ_domain_CS"/>
</dbReference>
<dbReference type="InterPro" id="IPR051100">
    <property type="entry name" value="DnaJ_subfamily_B/C"/>
</dbReference>
<dbReference type="InterPro" id="IPR015399">
    <property type="entry name" value="DUF1977_DnaJ-like"/>
</dbReference>
<dbReference type="InterPro" id="IPR036869">
    <property type="entry name" value="J_dom_sf"/>
</dbReference>
<dbReference type="PANTHER" id="PTHR43908">
    <property type="entry name" value="AT29763P-RELATED"/>
    <property type="match status" value="1"/>
</dbReference>
<dbReference type="PANTHER" id="PTHR43908:SF4">
    <property type="entry name" value="DNAJ HOMOLOG SUBFAMILY B MEMBER 14"/>
    <property type="match status" value="1"/>
</dbReference>
<dbReference type="Pfam" id="PF00226">
    <property type="entry name" value="DnaJ"/>
    <property type="match status" value="1"/>
</dbReference>
<dbReference type="Pfam" id="PF09320">
    <property type="entry name" value="DUF1977"/>
    <property type="match status" value="1"/>
</dbReference>
<dbReference type="PRINTS" id="PR00625">
    <property type="entry name" value="JDOMAIN"/>
</dbReference>
<dbReference type="SMART" id="SM00271">
    <property type="entry name" value="DnaJ"/>
    <property type="match status" value="1"/>
</dbReference>
<dbReference type="SUPFAM" id="SSF46565">
    <property type="entry name" value="Chaperone J-domain"/>
    <property type="match status" value="1"/>
</dbReference>
<dbReference type="PROSITE" id="PS00636">
    <property type="entry name" value="DNAJ_1"/>
    <property type="match status" value="1"/>
</dbReference>
<dbReference type="PROSITE" id="PS50076">
    <property type="entry name" value="DNAJ_2"/>
    <property type="match status" value="1"/>
</dbReference>
<comment type="function">
    <text evidence="1">Acts as a co-chaperone with HSPA8/Hsc70; required to promote protein folding and trafficking, prevent aggregation of client proteins, and promote unfolded proteins to endoplasmic reticulum-associated degradation (ERAD) pathway. Acts by determining HSPA8/Hsc70's ATPase and polypeptide-binding activities. Can also act independently of HSPA8/Hsc70: together with DNAJB12, acts as a chaperone that promotes maturation of potassium channels KCND2 and KCNH2 by stabilizing nascent channel subunits and assembling them into tetramers. While stabilization of nascent channel proteins is dependent on HSPA8/Hsc70, the process of oligomerization of channel subunits is independent of HSPA8/Hsc70. When overexpressed, forms membranous structures together with DNAJB12 and HSPA8/Hsc70 within the nucleus; the role of these structures, named DJANGOs, is still unclear.</text>
</comment>
<comment type="subunit">
    <text evidence="1">Interacts (via J domain) with HSPA8/Hsc70. Forms a multiprotein complex, at least composed of DNAJB12, DNAJB14, HSPA8/Hsc70 and SGTA; interaction with DNAJB14 and HSPA8/Hsc70 is direct.</text>
</comment>
<comment type="subcellular location">
    <subcellularLocation>
        <location evidence="1">Endoplasmic reticulum membrane</location>
        <topology evidence="2">Single-pass membrane protein</topology>
    </subcellularLocation>
    <subcellularLocation>
        <location evidence="1">Nucleus membrane</location>
        <topology evidence="2">Single-pass membrane protein</topology>
    </subcellularLocation>
    <text evidence="1">Localizes to the endoplasmic reticulum membrane. When overexpressed, forms membranous structures in the nucleus.</text>
</comment>
<comment type="alternative products">
    <event type="alternative splicing"/>
    <isoform>
        <id>Q149L6-1</id>
        <name>1</name>
        <sequence type="displayed"/>
    </isoform>
    <isoform>
        <id>Q149L6-2</id>
        <name>2</name>
        <sequence type="described" ref="VSP_024008"/>
    </isoform>
    <isoform>
        <id>Q149L6-3</id>
        <name>3</name>
        <sequence type="described" ref="VSP_024009 VSP_024010"/>
    </isoform>
</comment>
<comment type="similarity">
    <text evidence="6">Belongs to the DnaJ family. DNAJB12/DNAJB14 subfamily.</text>
</comment>
<name>DJB14_MOUSE</name>